<reference key="1">
    <citation type="journal article" date="2001" name="Mol. Biochem. Parasitol.">
        <title>Characterization of the ornithine aminotransferase from Plasmodium falciparum.</title>
        <authorList>
            <person name="Gafan C."/>
            <person name="Wilson J."/>
            <person name="Berger L.C."/>
            <person name="Berger B.J."/>
        </authorList>
    </citation>
    <scope>NUCLEOTIDE SEQUENCE [GENOMIC DNA]</scope>
    <scope>FUNCTION</scope>
    <scope>CATALYTIC ACTIVITY</scope>
    <scope>BIOPHYSICOCHEMICAL PROPERTIES</scope>
    <scope>PATHWAY</scope>
</reference>
<reference key="2">
    <citation type="journal article" date="2002" name="Nature">
        <title>Genome sequence of the human malaria parasite Plasmodium falciparum.</title>
        <authorList>
            <person name="Gardner M.J."/>
            <person name="Hall N."/>
            <person name="Fung E."/>
            <person name="White O."/>
            <person name="Berriman M."/>
            <person name="Hyman R.W."/>
            <person name="Carlton J.M."/>
            <person name="Pain A."/>
            <person name="Nelson K.E."/>
            <person name="Bowman S."/>
            <person name="Paulsen I.T."/>
            <person name="James K.D."/>
            <person name="Eisen J.A."/>
            <person name="Rutherford K.M."/>
            <person name="Salzberg S.L."/>
            <person name="Craig A."/>
            <person name="Kyes S."/>
            <person name="Chan M.-S."/>
            <person name="Nene V."/>
            <person name="Shallom S.J."/>
            <person name="Suh B."/>
            <person name="Peterson J."/>
            <person name="Angiuoli S."/>
            <person name="Pertea M."/>
            <person name="Allen J."/>
            <person name="Selengut J."/>
            <person name="Haft D."/>
            <person name="Mather M.W."/>
            <person name="Vaidya A.B."/>
            <person name="Martin D.M.A."/>
            <person name="Fairlamb A.H."/>
            <person name="Fraunholz M.J."/>
            <person name="Roos D.S."/>
            <person name="Ralph S.A."/>
            <person name="McFadden G.I."/>
            <person name="Cummings L.M."/>
            <person name="Subramanian G.M."/>
            <person name="Mungall C."/>
            <person name="Venter J.C."/>
            <person name="Carucci D.J."/>
            <person name="Hoffman S.L."/>
            <person name="Newbold C."/>
            <person name="Davis R.W."/>
            <person name="Fraser C.M."/>
            <person name="Barrell B.G."/>
        </authorList>
    </citation>
    <scope>NUCLEOTIDE SEQUENCE [LARGE SCALE GENOMIC DNA]</scope>
    <source>
        <strain>3D7</strain>
    </source>
</reference>
<reference key="3">
    <citation type="journal article" date="2002" name="Nature">
        <title>Sequence of Plasmodium falciparum chromosomes 1, 3-9 and 13.</title>
        <authorList>
            <person name="Hall N."/>
            <person name="Pain A."/>
            <person name="Berriman M."/>
            <person name="Churcher C.M."/>
            <person name="Harris B."/>
            <person name="Harris D."/>
            <person name="Mungall K.L."/>
            <person name="Bowman S."/>
            <person name="Atkin R."/>
            <person name="Baker S."/>
            <person name="Barron A."/>
            <person name="Brooks K."/>
            <person name="Buckee C.O."/>
            <person name="Burrows C."/>
            <person name="Cherevach I."/>
            <person name="Chillingworth C."/>
            <person name="Chillingworth T."/>
            <person name="Christodoulou Z."/>
            <person name="Clark L."/>
            <person name="Clark R."/>
            <person name="Corton C."/>
            <person name="Cronin A."/>
            <person name="Davies R.M."/>
            <person name="Davis P."/>
            <person name="Dear P."/>
            <person name="Dearden F."/>
            <person name="Doggett J."/>
            <person name="Feltwell T."/>
            <person name="Goble A."/>
            <person name="Goodhead I."/>
            <person name="Gwilliam R."/>
            <person name="Hamlin N."/>
            <person name="Hance Z."/>
            <person name="Harper D."/>
            <person name="Hauser H."/>
            <person name="Hornsby T."/>
            <person name="Holroyd S."/>
            <person name="Horrocks P."/>
            <person name="Humphray S."/>
            <person name="Jagels K."/>
            <person name="James K.D."/>
            <person name="Johnson D."/>
            <person name="Kerhornou A."/>
            <person name="Knights A."/>
            <person name="Konfortov B."/>
            <person name="Kyes S."/>
            <person name="Larke N."/>
            <person name="Lawson D."/>
            <person name="Lennard N."/>
            <person name="Line A."/>
            <person name="Maddison M."/>
            <person name="Mclean J."/>
            <person name="Mooney P."/>
            <person name="Moule S."/>
            <person name="Murphy L."/>
            <person name="Oliver K."/>
            <person name="Ormond D."/>
            <person name="Price C."/>
            <person name="Quail M.A."/>
            <person name="Rabbinowitsch E."/>
            <person name="Rajandream M.A."/>
            <person name="Rutter S."/>
            <person name="Rutherford K.M."/>
            <person name="Sanders M."/>
            <person name="Simmonds M."/>
            <person name="Seeger K."/>
            <person name="Sharp S."/>
            <person name="Smith R."/>
            <person name="Squares R."/>
            <person name="Squares S."/>
            <person name="Stevens K."/>
            <person name="Taylor K."/>
            <person name="Tivey A."/>
            <person name="Unwin L."/>
            <person name="Whitehead S."/>
            <person name="Woodward J.R."/>
            <person name="Sulston J.E."/>
            <person name="Craig A."/>
            <person name="Newbold C."/>
            <person name="Barrell B.G."/>
        </authorList>
    </citation>
    <scope>NUCLEOTIDE SEQUENCE [LARGE SCALE GENOMIC DNA]</scope>
    <source>
        <strain>3D7</strain>
    </source>
</reference>
<reference evidence="7 8" key="4">
    <citation type="journal article" date="2010" name="J. Mol. Biol.">
        <title>Redox regulation of Plasmodium falciparum ornithine delta-aminotransferase.</title>
        <authorList>
            <person name="Jortzik E."/>
            <person name="Fritz-Wolf K."/>
            <person name="Sturm N."/>
            <person name="Hipp M."/>
            <person name="Rahlfs S."/>
            <person name="Becker K."/>
        </authorList>
    </citation>
    <scope>X-RAY CRYSTALLOGRAPHY (2.30 ANGSTROMS)</scope>
    <scope>FUNCTION</scope>
    <scope>CATALYTIC ACTIVITY</scope>
    <scope>ACTIVITY REGULATION</scope>
    <scope>BIOPHYSICOCHEMICAL PROPERTIES</scope>
    <scope>SUBUNIT</scope>
    <scope>DISULFIDE BOND</scope>
    <scope>MUTAGENESIS OF CYS-154; CYS-163; CYS-316; CYS-350 AND CYS-390</scope>
</reference>
<name>OAT_PLAF7</name>
<sequence>MDFVKELKSSQDYMNNELTYGAHNYDPIPVVLKRGKGVFVYDIEDRRYYDFLSAYSSVNQGHCHPDILNAMINQAKKLTICSRAFFSDSLGVCERYLTNLFGYDKVLMMNTGAEASETAYKLCRKWGYEVKKIPENSAKIIVCNNNFSGRTLGCVSASTDKKCKNNFGPFVPNFLKVPYDDLEALEKELQDPNVCAFIVEPVQGEAGVIVPSDSYFPGVASLCKKYNVLFVADEVQTGLGRTGKLLCTHHYGVKPDVILLGKALSGGHYPISAILANDDVMLVLKPGEHGSTYGGNPLAAAICVEALKVLINEKLCENADKLGAPFLQNLKEQLKDSKVVREVRGKGLLCAIEFKNDLVNVWDICLKFKENGLITRSVHDKTVRLTPPLCITKEQLDECTEIIVKTVKFFDDNL</sequence>
<comment type="function">
    <text evidence="2 3">The enzyme has a very narrow substrate specificity and can only catalyze the transamination of alpha-ketoglutarate with ornithine or N-acetylornithine and, to a lesser extent, of glutamate-5-semialdehyde with glutamate and alanine.</text>
</comment>
<comment type="catalytic activity">
    <reaction evidence="2">
        <text>a 2-oxocarboxylate + L-ornithine = L-glutamate 5-semialdehyde + an L-alpha-amino acid</text>
        <dbReference type="Rhea" id="RHEA:13877"/>
        <dbReference type="ChEBI" id="CHEBI:35179"/>
        <dbReference type="ChEBI" id="CHEBI:46911"/>
        <dbReference type="ChEBI" id="CHEBI:58066"/>
        <dbReference type="ChEBI" id="CHEBI:59869"/>
        <dbReference type="EC" id="2.6.1.13"/>
    </reaction>
</comment>
<comment type="catalytic activity">
    <reaction evidence="2 3">
        <text>L-ornithine + 2-oxoglutarate = L-glutamate 5-semialdehyde + L-glutamate</text>
        <dbReference type="Rhea" id="RHEA:25160"/>
        <dbReference type="ChEBI" id="CHEBI:16810"/>
        <dbReference type="ChEBI" id="CHEBI:29985"/>
        <dbReference type="ChEBI" id="CHEBI:46911"/>
        <dbReference type="ChEBI" id="CHEBI:58066"/>
        <dbReference type="EC" id="2.6.1.13"/>
    </reaction>
    <physiologicalReaction direction="left-to-right" evidence="2 3">
        <dbReference type="Rhea" id="RHEA:25161"/>
    </physiologicalReaction>
</comment>
<comment type="cofactor">
    <cofactor evidence="1">
        <name>pyridoxal 5'-phosphate</name>
        <dbReference type="ChEBI" id="CHEBI:597326"/>
    </cofactor>
</comment>
<comment type="activity regulation">
    <text evidence="3">Unlike for mammalian OATs, activity is increased by TRX1-mediated reduction of the disulfide bond between Cys-154 and Cys-163 (PubMed:20673832). Binding to TRX1 may also induce conformational changes that facilitate substrate binding (PubMed:20673832).</text>
</comment>
<comment type="biophysicochemical properties">
    <kinetics>
        <KM evidence="2">3.95 mM for ornithine (at 37 degrees Celsius, pH 7.4 and with 2-oxoglutarate as cosubstrate)</KM>
        <KM evidence="3">1.6 mM for ornithine (at 37 degrees Celsius, pH 7.4 and with 2-oxoglutarate as cosubstrate)</KM>
        <KM evidence="3">0.9 mM for ornithine (at 37 degrees Celsius, pH 7.4, with 2-oxoglutarate as cosubstrate and in presence of TRX1/thioredoxin)</KM>
        <KM evidence="2">1.53 mM for N-acetylornithine (at 37 degrees Celsius, pH 7.4 and with 2-oxoglutarate as cosubstrate)</KM>
        <KM evidence="2">0.65 mM for 2-oxoglutarate (at 37 degrees Celsius, pH 7.4 and with ornithine as cosubstrate)</KM>
        <KM evidence="2">0.9 mM for 2-oxoglutarate (at 37 degrees Celsius, pH 7.4 and with ornithine as cosubstrate)</KM>
        <KM evidence="2">0.3 mM for 2-oxoglutarate (at 37 degrees Celsius, pH 7.4, with ornithine as cosubstrate and in presence of TRX1/thioredoxin)</KM>
        <Vmax evidence="2">56.12 nmol/min/mg enzyme towards ornithine (at 37 degrees Celsius, pH 7.4 and with 2-oxoglutarate as cosubstrate)</Vmax>
        <Vmax evidence="2">18.56 nmol/min/mg enzyme towards N-acetylornithine (at 37 degrees Celsius, pH 7.4 and with 2-oxoglutarate as cosubstrate)</Vmax>
        <Vmax evidence="2">30.28 nmol/min/mg enzyme towards 2-oxoglutarate (at 37 degrees Celsius, pH 7.4 and with ornithine as cosubstrate)</Vmax>
    </kinetics>
</comment>
<comment type="pathway">
    <text evidence="2">Amino-acid biosynthesis; L-proline biosynthesis; L-glutamate 5-semialdehyde from L-ornithine: step 1/1.</text>
</comment>
<comment type="subunit">
    <text evidence="3">Homodimer.</text>
</comment>
<comment type="subcellular location">
    <subcellularLocation>
        <location evidence="6">Cytoplasm</location>
    </subcellularLocation>
</comment>
<comment type="PTM">
    <text evidence="3">The disulfide bond between Cys-154 and Cys-163 is reduced by TRX1 which increases OAT catalytic activity.</text>
</comment>
<comment type="similarity">
    <text evidence="6">Belongs to the class-III pyridoxal-phosphate-dependent aminotransferase family.</text>
</comment>
<proteinExistence type="evidence at protein level"/>
<protein>
    <recommendedName>
        <fullName evidence="4">Ornithine aminotransferase</fullName>
        <shortName evidence="5">PfOAT</shortName>
        <ecNumber evidence="2 3">2.6.1.13</ecNumber>
    </recommendedName>
    <alternativeName>
        <fullName evidence="6">Ornithine--oxo-acid aminotransferase</fullName>
    </alternativeName>
</protein>
<feature type="chain" id="PRO_0000233395" description="Ornithine aminotransferase">
    <location>
        <begin position="1"/>
        <end position="414"/>
    </location>
</feature>
<feature type="modified residue" description="N6-(pyridoxal phosphate)lysine" evidence="1">
    <location>
        <position position="262"/>
    </location>
</feature>
<feature type="disulfide bond" description="Reversible" evidence="3">
    <location>
        <begin position="154"/>
        <end position="163"/>
    </location>
</feature>
<feature type="mutagenesis site" description="Severe reduction in catalytic activity. Does not affect TRX1-mediated activation. Severe reduction in catalytic activity and loss of TRX1-mediated activation; when associated with S-163." evidence="3">
    <original>C</original>
    <variation>S</variation>
    <location>
        <position position="154"/>
    </location>
</feature>
<feature type="mutagenesis site" description="No effect on catalytic activity. Requires higher concentrations of TRX1 for activation. Severe reduction in catalytic activity and loss of TRX1-mediated activation; when associated with S-154." evidence="3">
    <original>C</original>
    <variation>S</variation>
    <location>
        <position position="163"/>
    </location>
</feature>
<feature type="mutagenesis site" description="About 70% reduction in catalytic activity. Does not affect TRX1-mediated activation." evidence="3">
    <original>C</original>
    <variation>S</variation>
    <location>
        <position position="316"/>
    </location>
</feature>
<feature type="mutagenesis site" description="About 70% reduction in catalytic activity. Does not affect TRX1-mediated activation." evidence="3">
    <original>C</original>
    <variation>S</variation>
    <location>
        <position position="350"/>
    </location>
</feature>
<feature type="mutagenesis site" description="About 70% reduction in catalytic activity. Does not affect TRX1-mediated activation." evidence="3">
    <original>C</original>
    <variation>S</variation>
    <location>
        <position position="390"/>
    </location>
</feature>
<feature type="sequence conflict" description="In Ref. 1; AAG44560." evidence="6" ref="1">
    <original>G</original>
    <variation>S</variation>
    <location>
        <position position="153"/>
    </location>
</feature>
<feature type="sequence conflict" description="In Ref. 1; AAG44560." evidence="6" ref="1">
    <original>Q</original>
    <variation>H</variation>
    <location>
        <position position="190"/>
    </location>
</feature>
<feature type="sequence conflict" description="In Ref. 1; AAG44560." evidence="6" ref="1">
    <original>FI</original>
    <variation>LN</variation>
    <location>
        <begin position="197"/>
        <end position="198"/>
    </location>
</feature>
<feature type="sequence conflict" description="In Ref. 1; AAG44560." evidence="6" ref="1">
    <original>A</original>
    <variation>V</variation>
    <location>
        <position position="206"/>
    </location>
</feature>
<feature type="sequence conflict" description="In Ref. 1; AAG44560." evidence="6" ref="1">
    <original>N</original>
    <variation>K</variation>
    <location>
        <position position="413"/>
    </location>
</feature>
<feature type="helix" evidence="9">
    <location>
        <begin position="10"/>
        <end position="20"/>
    </location>
</feature>
<feature type="strand" evidence="9">
    <location>
        <begin position="31"/>
        <end position="37"/>
    </location>
</feature>
<feature type="strand" evidence="9">
    <location>
        <begin position="39"/>
        <end position="42"/>
    </location>
</feature>
<feature type="strand" evidence="9">
    <location>
        <begin position="47"/>
        <end position="52"/>
    </location>
</feature>
<feature type="helix" evidence="9">
    <location>
        <begin position="53"/>
        <end position="56"/>
    </location>
</feature>
<feature type="turn" evidence="9">
    <location>
        <begin position="57"/>
        <end position="60"/>
    </location>
</feature>
<feature type="helix" evidence="9">
    <location>
        <begin position="65"/>
        <end position="77"/>
    </location>
</feature>
<feature type="strand" evidence="9">
    <location>
        <begin position="85"/>
        <end position="87"/>
    </location>
</feature>
<feature type="helix" evidence="9">
    <location>
        <begin position="88"/>
        <end position="101"/>
    </location>
</feature>
<feature type="strand" evidence="9">
    <location>
        <begin position="104"/>
        <end position="110"/>
    </location>
</feature>
<feature type="helix" evidence="9">
    <location>
        <begin position="112"/>
        <end position="129"/>
    </location>
</feature>
<feature type="strand" evidence="9">
    <location>
        <begin position="139"/>
        <end position="145"/>
    </location>
</feature>
<feature type="strand" evidence="9">
    <location>
        <begin position="174"/>
        <end position="177"/>
    </location>
</feature>
<feature type="helix" evidence="9">
    <location>
        <begin position="182"/>
        <end position="189"/>
    </location>
</feature>
<feature type="strand" evidence="9">
    <location>
        <begin position="194"/>
        <end position="199"/>
    </location>
</feature>
<feature type="strand" evidence="9">
    <location>
        <begin position="201"/>
        <end position="203"/>
    </location>
</feature>
<feature type="turn" evidence="9">
    <location>
        <begin position="204"/>
        <end position="207"/>
    </location>
</feature>
<feature type="helix" evidence="9">
    <location>
        <begin position="215"/>
        <end position="226"/>
    </location>
</feature>
<feature type="strand" evidence="9">
    <location>
        <begin position="229"/>
        <end position="233"/>
    </location>
</feature>
<feature type="turn" evidence="9">
    <location>
        <begin position="235"/>
        <end position="242"/>
    </location>
</feature>
<feature type="strand" evidence="9">
    <location>
        <begin position="243"/>
        <end position="246"/>
    </location>
</feature>
<feature type="helix" evidence="9">
    <location>
        <begin position="247"/>
        <end position="250"/>
    </location>
</feature>
<feature type="strand" evidence="9">
    <location>
        <begin position="256"/>
        <end position="260"/>
    </location>
</feature>
<feature type="helix" evidence="9">
    <location>
        <begin position="262"/>
        <end position="265"/>
    </location>
</feature>
<feature type="strand" evidence="9">
    <location>
        <begin position="272"/>
        <end position="276"/>
    </location>
</feature>
<feature type="helix" evidence="9">
    <location>
        <begin position="278"/>
        <end position="281"/>
    </location>
</feature>
<feature type="turn" evidence="10">
    <location>
        <begin position="292"/>
        <end position="295"/>
    </location>
</feature>
<feature type="helix" evidence="9">
    <location>
        <begin position="297"/>
        <end position="312"/>
    </location>
</feature>
<feature type="helix" evidence="9">
    <location>
        <begin position="315"/>
        <end position="333"/>
    </location>
</feature>
<feature type="turn" evidence="9">
    <location>
        <begin position="334"/>
        <end position="336"/>
    </location>
</feature>
<feature type="strand" evidence="9">
    <location>
        <begin position="338"/>
        <end position="346"/>
    </location>
</feature>
<feature type="strand" evidence="9">
    <location>
        <begin position="349"/>
        <end position="354"/>
    </location>
</feature>
<feature type="turn" evidence="9">
    <location>
        <begin position="356"/>
        <end position="358"/>
    </location>
</feature>
<feature type="helix" evidence="9">
    <location>
        <begin position="361"/>
        <end position="370"/>
    </location>
</feature>
<feature type="turn" evidence="9">
    <location>
        <begin position="379"/>
        <end position="381"/>
    </location>
</feature>
<feature type="strand" evidence="9">
    <location>
        <begin position="382"/>
        <end position="385"/>
    </location>
</feature>
<feature type="helix" evidence="9">
    <location>
        <begin position="393"/>
        <end position="412"/>
    </location>
</feature>
<keyword id="KW-0002">3D-structure</keyword>
<keyword id="KW-0032">Aminotransferase</keyword>
<keyword id="KW-0963">Cytoplasm</keyword>
<keyword id="KW-1015">Disulfide bond</keyword>
<keyword id="KW-0663">Pyridoxal phosphate</keyword>
<keyword id="KW-1185">Reference proteome</keyword>
<keyword id="KW-0808">Transferase</keyword>
<gene>
    <name evidence="4" type="primary">OAT</name>
    <name type="ORF">PF3D7_0608800</name>
    <name type="ORF">PFF0435w</name>
</gene>
<evidence type="ECO:0000250" key="1">
    <source>
        <dbReference type="UniProtKB" id="P04181"/>
    </source>
</evidence>
<evidence type="ECO:0000269" key="2">
    <source>
    </source>
</evidence>
<evidence type="ECO:0000269" key="3">
    <source>
    </source>
</evidence>
<evidence type="ECO:0000303" key="4">
    <source>
    </source>
</evidence>
<evidence type="ECO:0000303" key="5">
    <source>
    </source>
</evidence>
<evidence type="ECO:0000305" key="6"/>
<evidence type="ECO:0007744" key="7">
    <source>
        <dbReference type="PDB" id="3LG0"/>
    </source>
</evidence>
<evidence type="ECO:0007744" key="8">
    <source>
        <dbReference type="PDB" id="3NTJ"/>
    </source>
</evidence>
<evidence type="ECO:0007829" key="9">
    <source>
        <dbReference type="PDB" id="3LG0"/>
    </source>
</evidence>
<evidence type="ECO:0007829" key="10">
    <source>
        <dbReference type="PDB" id="3NTJ"/>
    </source>
</evidence>
<organism>
    <name type="scientific">Plasmodium falciparum (isolate 3D7)</name>
    <dbReference type="NCBI Taxonomy" id="36329"/>
    <lineage>
        <taxon>Eukaryota</taxon>
        <taxon>Sar</taxon>
        <taxon>Alveolata</taxon>
        <taxon>Apicomplexa</taxon>
        <taxon>Aconoidasida</taxon>
        <taxon>Haemosporida</taxon>
        <taxon>Plasmodiidae</taxon>
        <taxon>Plasmodium</taxon>
        <taxon>Plasmodium (Laverania)</taxon>
    </lineage>
</organism>
<dbReference type="EC" id="2.6.1.13" evidence="2 3"/>
<dbReference type="EMBL" id="AF249587">
    <property type="protein sequence ID" value="AAG44560.1"/>
    <property type="molecule type" value="Genomic_DNA"/>
</dbReference>
<dbReference type="EMBL" id="AL844505">
    <property type="protein sequence ID" value="CAG25330.1"/>
    <property type="molecule type" value="Genomic_DNA"/>
</dbReference>
<dbReference type="RefSeq" id="XP_966078.1">
    <property type="nucleotide sequence ID" value="XM_960985.1"/>
</dbReference>
<dbReference type="PDB" id="3LG0">
    <property type="method" value="X-ray"/>
    <property type="resolution" value="2.30 A"/>
    <property type="chains" value="A/B/C/D=1-414"/>
</dbReference>
<dbReference type="PDB" id="3NTJ">
    <property type="method" value="X-ray"/>
    <property type="resolution" value="3.00 A"/>
    <property type="chains" value="A/B/C/D=1-414"/>
</dbReference>
<dbReference type="PDBsum" id="3LG0"/>
<dbReference type="PDBsum" id="3NTJ"/>
<dbReference type="SMR" id="Q6LFH8"/>
<dbReference type="FunCoup" id="Q6LFH8">
    <property type="interactions" value="166"/>
</dbReference>
<dbReference type="IntAct" id="Q6LFH8">
    <property type="interactions" value="1"/>
</dbReference>
<dbReference type="MINT" id="Q6LFH8"/>
<dbReference type="STRING" id="36329.Q6LFH8"/>
<dbReference type="DrugBank" id="DB11638">
    <property type="generic name" value="Artenimol"/>
</dbReference>
<dbReference type="SwissPalm" id="Q6LFH8"/>
<dbReference type="PaxDb" id="5833-PFF0435w"/>
<dbReference type="EnsemblProtists" id="CAG25330">
    <property type="protein sequence ID" value="CAG25330"/>
    <property type="gene ID" value="PF3D7_0608800"/>
</dbReference>
<dbReference type="GeneID" id="3885911"/>
<dbReference type="KEGG" id="pfa:PF3D7_0608800"/>
<dbReference type="VEuPathDB" id="PlasmoDB:PF3D7_0608800"/>
<dbReference type="HOGENOM" id="CLU_016922_10_3_1"/>
<dbReference type="InParanoid" id="Q6LFH8"/>
<dbReference type="OMA" id="RSAWDLC"/>
<dbReference type="OrthoDB" id="425114at2759"/>
<dbReference type="PhylomeDB" id="Q6LFH8"/>
<dbReference type="BRENDA" id="2.6.1.13">
    <property type="organism ID" value="4889"/>
</dbReference>
<dbReference type="Reactome" id="R-PFA-8964539">
    <property type="pathway name" value="Glutamate and glutamine metabolism"/>
</dbReference>
<dbReference type="UniPathway" id="UPA00098">
    <property type="reaction ID" value="UER00358"/>
</dbReference>
<dbReference type="EvolutionaryTrace" id="Q6LFH8"/>
<dbReference type="Proteomes" id="UP000001450">
    <property type="component" value="Chromosome 6"/>
</dbReference>
<dbReference type="GO" id="GO:0005737">
    <property type="term" value="C:cytoplasm"/>
    <property type="evidence" value="ECO:0000318"/>
    <property type="project" value="GO_Central"/>
</dbReference>
<dbReference type="GO" id="GO:0042802">
    <property type="term" value="F:identical protein binding"/>
    <property type="evidence" value="ECO:0000318"/>
    <property type="project" value="GO_Central"/>
</dbReference>
<dbReference type="GO" id="GO:0004587">
    <property type="term" value="F:ornithine aminotransferase activity"/>
    <property type="evidence" value="ECO:0000314"/>
    <property type="project" value="UniProtKB"/>
</dbReference>
<dbReference type="GO" id="GO:0030170">
    <property type="term" value="F:pyridoxal phosphate binding"/>
    <property type="evidence" value="ECO:0000318"/>
    <property type="project" value="GO_Central"/>
</dbReference>
<dbReference type="GO" id="GO:0019544">
    <property type="term" value="P:arginine catabolic process to glutamate"/>
    <property type="evidence" value="ECO:0000318"/>
    <property type="project" value="GO_Central"/>
</dbReference>
<dbReference type="GO" id="GO:0010121">
    <property type="term" value="P:arginine catabolic process to proline via ornithine"/>
    <property type="evidence" value="ECO:0000318"/>
    <property type="project" value="GO_Central"/>
</dbReference>
<dbReference type="GO" id="GO:0055129">
    <property type="term" value="P:L-proline biosynthetic process"/>
    <property type="evidence" value="ECO:0007669"/>
    <property type="project" value="UniProtKB-UniPathway"/>
</dbReference>
<dbReference type="GO" id="GO:0006591">
    <property type="term" value="P:ornithine metabolic process"/>
    <property type="evidence" value="ECO:0000314"/>
    <property type="project" value="UniProtKB"/>
</dbReference>
<dbReference type="CDD" id="cd00610">
    <property type="entry name" value="OAT_like"/>
    <property type="match status" value="1"/>
</dbReference>
<dbReference type="FunFam" id="3.40.640.10:FF:000011">
    <property type="entry name" value="Ornithine aminotransferase"/>
    <property type="match status" value="1"/>
</dbReference>
<dbReference type="FunFam" id="3.90.1150.10:FF:000152">
    <property type="entry name" value="Ornithine aminotransferase"/>
    <property type="match status" value="1"/>
</dbReference>
<dbReference type="Gene3D" id="3.90.1150.10">
    <property type="entry name" value="Aspartate Aminotransferase, domain 1"/>
    <property type="match status" value="1"/>
</dbReference>
<dbReference type="Gene3D" id="3.40.640.10">
    <property type="entry name" value="Type I PLP-dependent aspartate aminotransferase-like (Major domain)"/>
    <property type="match status" value="1"/>
</dbReference>
<dbReference type="InterPro" id="IPR005814">
    <property type="entry name" value="Aminotrans_3"/>
</dbReference>
<dbReference type="InterPro" id="IPR049704">
    <property type="entry name" value="Aminotrans_3_PPA_site"/>
</dbReference>
<dbReference type="InterPro" id="IPR050103">
    <property type="entry name" value="Class-III_PLP-dep_AT"/>
</dbReference>
<dbReference type="InterPro" id="IPR010164">
    <property type="entry name" value="Orn_aminotrans"/>
</dbReference>
<dbReference type="InterPro" id="IPR015424">
    <property type="entry name" value="PyrdxlP-dep_Trfase"/>
</dbReference>
<dbReference type="InterPro" id="IPR015421">
    <property type="entry name" value="PyrdxlP-dep_Trfase_major"/>
</dbReference>
<dbReference type="InterPro" id="IPR015422">
    <property type="entry name" value="PyrdxlP-dep_Trfase_small"/>
</dbReference>
<dbReference type="NCBIfam" id="TIGR01885">
    <property type="entry name" value="Orn_aminotrans"/>
    <property type="match status" value="1"/>
</dbReference>
<dbReference type="PANTHER" id="PTHR11986">
    <property type="entry name" value="AMINOTRANSFERASE CLASS III"/>
    <property type="match status" value="1"/>
</dbReference>
<dbReference type="PANTHER" id="PTHR11986:SF18">
    <property type="entry name" value="ORNITHINE AMINOTRANSFERASE, MITOCHONDRIAL"/>
    <property type="match status" value="1"/>
</dbReference>
<dbReference type="Pfam" id="PF00202">
    <property type="entry name" value="Aminotran_3"/>
    <property type="match status" value="1"/>
</dbReference>
<dbReference type="PIRSF" id="PIRSF000521">
    <property type="entry name" value="Transaminase_4ab_Lys_Orn"/>
    <property type="match status" value="1"/>
</dbReference>
<dbReference type="SUPFAM" id="SSF53383">
    <property type="entry name" value="PLP-dependent transferases"/>
    <property type="match status" value="1"/>
</dbReference>
<dbReference type="PROSITE" id="PS00600">
    <property type="entry name" value="AA_TRANSFER_CLASS_3"/>
    <property type="match status" value="1"/>
</dbReference>
<accession>Q6LFH8</accession>
<accession>Q9GQI3</accession>